<keyword id="KW-1003">Cell membrane</keyword>
<keyword id="KW-0472">Membrane</keyword>
<keyword id="KW-0653">Protein transport</keyword>
<keyword id="KW-1185">Reference proteome</keyword>
<keyword id="KW-0811">Translocation</keyword>
<keyword id="KW-0812">Transmembrane</keyword>
<keyword id="KW-1133">Transmembrane helix</keyword>
<keyword id="KW-0813">Transport</keyword>
<gene>
    <name type="primary">secG</name>
    <name type="ordered locus">UU056</name>
</gene>
<name>SECG_UREPA</name>
<protein>
    <recommendedName>
        <fullName>Probable protein-export membrane protein SecG</fullName>
    </recommendedName>
</protein>
<accession>Q9PR89</accession>
<dbReference type="EMBL" id="AF222894">
    <property type="protein sequence ID" value="AAF30461.1"/>
    <property type="molecule type" value="Genomic_DNA"/>
</dbReference>
<dbReference type="RefSeq" id="WP_006688648.1">
    <property type="nucleotide sequence ID" value="NC_002162.1"/>
</dbReference>
<dbReference type="SMR" id="Q9PR89"/>
<dbReference type="STRING" id="273119.UU056"/>
<dbReference type="EnsemblBacteria" id="AAF30461">
    <property type="protein sequence ID" value="AAF30461"/>
    <property type="gene ID" value="UU056"/>
</dbReference>
<dbReference type="GeneID" id="29672287"/>
<dbReference type="KEGG" id="uur:UU056"/>
<dbReference type="eggNOG" id="ENOG502ZX2S">
    <property type="taxonomic scope" value="Bacteria"/>
</dbReference>
<dbReference type="HOGENOM" id="CLU_196584_0_0_14"/>
<dbReference type="OrthoDB" id="401067at2"/>
<dbReference type="Proteomes" id="UP000000423">
    <property type="component" value="Chromosome"/>
</dbReference>
<dbReference type="GO" id="GO:0005886">
    <property type="term" value="C:plasma membrane"/>
    <property type="evidence" value="ECO:0007669"/>
    <property type="project" value="UniProtKB-SubCell"/>
</dbReference>
<dbReference type="GO" id="GO:0015450">
    <property type="term" value="F:protein-transporting ATPase activity"/>
    <property type="evidence" value="ECO:0007669"/>
    <property type="project" value="InterPro"/>
</dbReference>
<dbReference type="GO" id="GO:0009306">
    <property type="term" value="P:protein secretion"/>
    <property type="evidence" value="ECO:0007669"/>
    <property type="project" value="InterPro"/>
</dbReference>
<dbReference type="InterPro" id="IPR004692">
    <property type="entry name" value="SecG"/>
</dbReference>
<dbReference type="NCBIfam" id="TIGR00810">
    <property type="entry name" value="secG"/>
    <property type="match status" value="1"/>
</dbReference>
<reference key="1">
    <citation type="journal article" date="2000" name="Nature">
        <title>The complete sequence of the mucosal pathogen Ureaplasma urealyticum.</title>
        <authorList>
            <person name="Glass J.I."/>
            <person name="Lefkowitz E.J."/>
            <person name="Glass J.S."/>
            <person name="Heiner C.R."/>
            <person name="Chen E.Y."/>
            <person name="Cassell G.H."/>
        </authorList>
    </citation>
    <scope>NUCLEOTIDE SEQUENCE [LARGE SCALE GENOMIC DNA]</scope>
    <source>
        <strain>ATCC 700970</strain>
    </source>
</reference>
<sequence length="74" mass="8241">MALTIVLILFSVLALIIGLLLSRTSPSGGLSSLNGQDLEIFKKTKDRGWIKGLQVFMFLLTIVMILIIIFYRVS</sequence>
<feature type="chain" id="PRO_0000157252" description="Probable protein-export membrane protein SecG">
    <location>
        <begin position="1"/>
        <end position="74"/>
    </location>
</feature>
<feature type="transmembrane region" description="Helical" evidence="2">
    <location>
        <begin position="1"/>
        <end position="21"/>
    </location>
</feature>
<feature type="transmembrane region" description="Helical" evidence="2">
    <location>
        <begin position="50"/>
        <end position="70"/>
    </location>
</feature>
<organism>
    <name type="scientific">Ureaplasma parvum serovar 3 (strain ATCC 700970)</name>
    <dbReference type="NCBI Taxonomy" id="273119"/>
    <lineage>
        <taxon>Bacteria</taxon>
        <taxon>Bacillati</taxon>
        <taxon>Mycoplasmatota</taxon>
        <taxon>Mycoplasmoidales</taxon>
        <taxon>Mycoplasmoidaceae</taxon>
        <taxon>Ureaplasma</taxon>
    </lineage>
</organism>
<proteinExistence type="inferred from homology"/>
<evidence type="ECO:0000250" key="1"/>
<evidence type="ECO:0000255" key="2"/>
<evidence type="ECO:0000305" key="3"/>
<comment type="function">
    <text evidence="1">Involved in protein export. Participates in an early event of protein translocation (By similarity).</text>
</comment>
<comment type="subcellular location">
    <subcellularLocation>
        <location evidence="1">Cell membrane</location>
        <topology evidence="1">Multi-pass membrane protein</topology>
    </subcellularLocation>
</comment>
<comment type="similarity">
    <text evidence="3">Belongs to the SecG family.</text>
</comment>